<protein>
    <recommendedName>
        <fullName>Bifunctional NAD(P)H-hydrate repair enzyme Nnr</fullName>
    </recommendedName>
    <alternativeName>
        <fullName>Nicotinamide nucleotide repair protein</fullName>
    </alternativeName>
    <domain>
        <recommendedName>
            <fullName>ADP-dependent (S)-NAD(P)H-hydrate dehydratase</fullName>
            <ecNumber>4.2.1.136</ecNumber>
        </recommendedName>
        <alternativeName>
            <fullName>ADP-dependent NAD(P)HX dehydratase</fullName>
        </alternativeName>
    </domain>
    <domain>
        <recommendedName>
            <fullName>NAD(P)H-hydrate epimerase</fullName>
            <ecNumber>5.1.99.6</ecNumber>
        </recommendedName>
        <alternativeName>
            <fullName>NAD(P)HX epimerase</fullName>
        </alternativeName>
    </domain>
</protein>
<gene>
    <name type="primary">nnr</name>
    <name type="ordered locus">MJ1586</name>
</gene>
<reference key="1">
    <citation type="journal article" date="1996" name="Science">
        <title>Complete genome sequence of the methanogenic archaeon, Methanococcus jannaschii.</title>
        <authorList>
            <person name="Bult C.J."/>
            <person name="White O."/>
            <person name="Olsen G.J."/>
            <person name="Zhou L."/>
            <person name="Fleischmann R.D."/>
            <person name="Sutton G.G."/>
            <person name="Blake J.A."/>
            <person name="FitzGerald L.M."/>
            <person name="Clayton R.A."/>
            <person name="Gocayne J.D."/>
            <person name="Kerlavage A.R."/>
            <person name="Dougherty B.A."/>
            <person name="Tomb J.-F."/>
            <person name="Adams M.D."/>
            <person name="Reich C.I."/>
            <person name="Overbeek R."/>
            <person name="Kirkness E.F."/>
            <person name="Weinstock K.G."/>
            <person name="Merrick J.M."/>
            <person name="Glodek A."/>
            <person name="Scott J.L."/>
            <person name="Geoghagen N.S.M."/>
            <person name="Weidman J.F."/>
            <person name="Fuhrmann J.L."/>
            <person name="Nguyen D."/>
            <person name="Utterback T.R."/>
            <person name="Kelley J.M."/>
            <person name="Peterson J.D."/>
            <person name="Sadow P.W."/>
            <person name="Hanna M.C."/>
            <person name="Cotton M.D."/>
            <person name="Roberts K.M."/>
            <person name="Hurst M.A."/>
            <person name="Kaine B.P."/>
            <person name="Borodovsky M."/>
            <person name="Klenk H.-P."/>
            <person name="Fraser C.M."/>
            <person name="Smith H.O."/>
            <person name="Woese C.R."/>
            <person name="Venter J.C."/>
        </authorList>
    </citation>
    <scope>NUCLEOTIDE SEQUENCE [LARGE SCALE GENOMIC DNA]</scope>
    <source>
        <strain>ATCC 43067 / DSM 2661 / JAL-1 / JCM 10045 / NBRC 100440</strain>
    </source>
</reference>
<keyword id="KW-0067">ATP-binding</keyword>
<keyword id="KW-0413">Isomerase</keyword>
<keyword id="KW-0456">Lyase</keyword>
<keyword id="KW-0479">Metal-binding</keyword>
<keyword id="KW-0511">Multifunctional enzyme</keyword>
<keyword id="KW-0520">NAD</keyword>
<keyword id="KW-0521">NADP</keyword>
<keyword id="KW-0547">Nucleotide-binding</keyword>
<keyword id="KW-0630">Potassium</keyword>
<keyword id="KW-1185">Reference proteome</keyword>
<dbReference type="EC" id="4.2.1.136"/>
<dbReference type="EC" id="5.1.99.6"/>
<dbReference type="EMBL" id="L77117">
    <property type="protein sequence ID" value="AAB99605.1"/>
    <property type="molecule type" value="Genomic_DNA"/>
</dbReference>
<dbReference type="PIR" id="A64498">
    <property type="entry name" value="A64498"/>
</dbReference>
<dbReference type="SMR" id="Q58981"/>
<dbReference type="FunCoup" id="Q58981">
    <property type="interactions" value="4"/>
</dbReference>
<dbReference type="STRING" id="243232.MJ_1586"/>
<dbReference type="PaxDb" id="243232-MJ_1586"/>
<dbReference type="EnsemblBacteria" id="AAB99605">
    <property type="protein sequence ID" value="AAB99605"/>
    <property type="gene ID" value="MJ_1586"/>
</dbReference>
<dbReference type="KEGG" id="mja:MJ_1586"/>
<dbReference type="eggNOG" id="arCOG00018">
    <property type="taxonomic scope" value="Archaea"/>
</dbReference>
<dbReference type="HOGENOM" id="CLU_024853_4_1_2"/>
<dbReference type="InParanoid" id="Q58981"/>
<dbReference type="PhylomeDB" id="Q58981"/>
<dbReference type="Proteomes" id="UP000000805">
    <property type="component" value="Chromosome"/>
</dbReference>
<dbReference type="GO" id="GO:0052855">
    <property type="term" value="F:ADP-dependent NAD(P)H-hydrate dehydratase activity"/>
    <property type="evidence" value="ECO:0007669"/>
    <property type="project" value="UniProtKB-UniRule"/>
</dbReference>
<dbReference type="GO" id="GO:0005524">
    <property type="term" value="F:ATP binding"/>
    <property type="evidence" value="ECO:0007669"/>
    <property type="project" value="UniProtKB-KW"/>
</dbReference>
<dbReference type="GO" id="GO:0046872">
    <property type="term" value="F:metal ion binding"/>
    <property type="evidence" value="ECO:0007669"/>
    <property type="project" value="UniProtKB-KW"/>
</dbReference>
<dbReference type="GO" id="GO:0052856">
    <property type="term" value="F:NAD(P)HX epimerase activity"/>
    <property type="evidence" value="ECO:0007669"/>
    <property type="project" value="UniProtKB-UniRule"/>
</dbReference>
<dbReference type="GO" id="GO:0110051">
    <property type="term" value="P:metabolite repair"/>
    <property type="evidence" value="ECO:0000318"/>
    <property type="project" value="GO_Central"/>
</dbReference>
<dbReference type="GO" id="GO:0046496">
    <property type="term" value="P:nicotinamide nucleotide metabolic process"/>
    <property type="evidence" value="ECO:0007669"/>
    <property type="project" value="UniProtKB-UniRule"/>
</dbReference>
<dbReference type="CDD" id="cd01171">
    <property type="entry name" value="YXKO-related"/>
    <property type="match status" value="1"/>
</dbReference>
<dbReference type="FunFam" id="3.40.1190.20:FF:000135">
    <property type="entry name" value="Multifunctional fusion protein"/>
    <property type="match status" value="1"/>
</dbReference>
<dbReference type="Gene3D" id="3.40.1190.20">
    <property type="match status" value="1"/>
</dbReference>
<dbReference type="Gene3D" id="3.40.50.10260">
    <property type="entry name" value="YjeF N-terminal domain"/>
    <property type="match status" value="1"/>
</dbReference>
<dbReference type="HAMAP" id="MF_01965">
    <property type="entry name" value="NADHX_dehydratase"/>
    <property type="match status" value="1"/>
</dbReference>
<dbReference type="HAMAP" id="MF_01966">
    <property type="entry name" value="NADHX_epimerase"/>
    <property type="match status" value="1"/>
</dbReference>
<dbReference type="InterPro" id="IPR017953">
    <property type="entry name" value="Carbohydrate_kinase_pred_CS"/>
</dbReference>
<dbReference type="InterPro" id="IPR000631">
    <property type="entry name" value="CARKD"/>
</dbReference>
<dbReference type="InterPro" id="IPR030677">
    <property type="entry name" value="Nnr"/>
</dbReference>
<dbReference type="InterPro" id="IPR029056">
    <property type="entry name" value="Ribokinase-like"/>
</dbReference>
<dbReference type="InterPro" id="IPR004443">
    <property type="entry name" value="YjeF_N_dom"/>
</dbReference>
<dbReference type="InterPro" id="IPR036652">
    <property type="entry name" value="YjeF_N_dom_sf"/>
</dbReference>
<dbReference type="NCBIfam" id="TIGR00196">
    <property type="entry name" value="yjeF_cterm"/>
    <property type="match status" value="1"/>
</dbReference>
<dbReference type="NCBIfam" id="TIGR00197">
    <property type="entry name" value="yjeF_nterm"/>
    <property type="match status" value="1"/>
</dbReference>
<dbReference type="PANTHER" id="PTHR12592:SF0">
    <property type="entry name" value="ATP-DEPENDENT (S)-NAD(P)H-HYDRATE DEHYDRATASE"/>
    <property type="match status" value="1"/>
</dbReference>
<dbReference type="PANTHER" id="PTHR12592">
    <property type="entry name" value="ATP-DEPENDENT (S)-NAD(P)H-HYDRATE DEHYDRATASE FAMILY MEMBER"/>
    <property type="match status" value="1"/>
</dbReference>
<dbReference type="Pfam" id="PF01256">
    <property type="entry name" value="Carb_kinase"/>
    <property type="match status" value="1"/>
</dbReference>
<dbReference type="Pfam" id="PF03853">
    <property type="entry name" value="YjeF_N"/>
    <property type="match status" value="1"/>
</dbReference>
<dbReference type="PIRSF" id="PIRSF017184">
    <property type="entry name" value="Nnr"/>
    <property type="match status" value="1"/>
</dbReference>
<dbReference type="SUPFAM" id="SSF53613">
    <property type="entry name" value="Ribokinase-like"/>
    <property type="match status" value="1"/>
</dbReference>
<dbReference type="SUPFAM" id="SSF64153">
    <property type="entry name" value="YjeF N-terminal domain-like"/>
    <property type="match status" value="1"/>
</dbReference>
<dbReference type="PROSITE" id="PS01049">
    <property type="entry name" value="YJEF_C_1"/>
    <property type="match status" value="1"/>
</dbReference>
<dbReference type="PROSITE" id="PS01050">
    <property type="entry name" value="YJEF_C_2"/>
    <property type="match status" value="1"/>
</dbReference>
<dbReference type="PROSITE" id="PS51383">
    <property type="entry name" value="YJEF_C_3"/>
    <property type="match status" value="1"/>
</dbReference>
<dbReference type="PROSITE" id="PS51385">
    <property type="entry name" value="YJEF_N"/>
    <property type="match status" value="1"/>
</dbReference>
<organism>
    <name type="scientific">Methanocaldococcus jannaschii (strain ATCC 43067 / DSM 2661 / JAL-1 / JCM 10045 / NBRC 100440)</name>
    <name type="common">Methanococcus jannaschii</name>
    <dbReference type="NCBI Taxonomy" id="243232"/>
    <lineage>
        <taxon>Archaea</taxon>
        <taxon>Methanobacteriati</taxon>
        <taxon>Methanobacteriota</taxon>
        <taxon>Methanomada group</taxon>
        <taxon>Methanococci</taxon>
        <taxon>Methanococcales</taxon>
        <taxon>Methanocaldococcaceae</taxon>
        <taxon>Methanocaldococcus</taxon>
    </lineage>
</organism>
<name>NNR_METJA</name>
<sequence length="491" mass="54979">MRRDINNFLFGERMELFEILKQKIKEKEVITPKEMAIIDDNAEFLGIQKILLMENAGKAVYEEIKDIDAEEFIIFCGTGNNGGDGFVVARHLGKGDVILIGKESEIKTYEARENFKILKNLAEFGNIRIREIKWAEEVNDIFERLKNKKAVIIDAMIGTGVKGELREPFKTIVDKINELKQINKNIFVISVDVETGHLESDLTITFHKRKTINKDNAIVKKIGIPKEAEYIVGWGDLKALRKRDSNSHKGQNGKVLIIGGSKDFYGAPILAGLAALKIVDLVGILSVGKVIDKVNHPEFIMYRVEGDYLSSQHVDYTLEIAKKYDVVVLGNGLGANNRTKAFLNEFLAKYDGKVVIDADAIKVIDYNNFEFSENYIFTPHKREFEYMGIDLDNIENIKSTIVLKGKYDIIFNANNLKINKTGNAGLTKGGTGDVLAGLIGALFAVNEAFLSACCGAFINGYAGDLLLKEKGYYYTPLDLIEKIPNVLKIFQ</sequence>
<comment type="function">
    <text evidence="1">Bifunctional enzyme that catalyzes the epimerization of the S- and R-forms of NAD(P)HX and the dehydration of the S-form of NAD(P)HX at the expense of ADP, which is converted to AMP. This allows the repair of both epimers of NAD(P)HX, a damaged form of NAD(P)H that is a result of enzymatic or heat-dependent hydration (By similarity).</text>
</comment>
<comment type="catalytic activity">
    <reaction>
        <text>(6S)-NADHX + ADP = AMP + phosphate + NADH + H(+)</text>
        <dbReference type="Rhea" id="RHEA:32223"/>
        <dbReference type="ChEBI" id="CHEBI:15378"/>
        <dbReference type="ChEBI" id="CHEBI:43474"/>
        <dbReference type="ChEBI" id="CHEBI:57945"/>
        <dbReference type="ChEBI" id="CHEBI:64074"/>
        <dbReference type="ChEBI" id="CHEBI:456215"/>
        <dbReference type="ChEBI" id="CHEBI:456216"/>
        <dbReference type="EC" id="4.2.1.136"/>
    </reaction>
</comment>
<comment type="catalytic activity">
    <reaction>
        <text>(6S)-NADPHX + ADP = AMP + phosphate + NADPH + H(+)</text>
        <dbReference type="Rhea" id="RHEA:32235"/>
        <dbReference type="ChEBI" id="CHEBI:15378"/>
        <dbReference type="ChEBI" id="CHEBI:43474"/>
        <dbReference type="ChEBI" id="CHEBI:57783"/>
        <dbReference type="ChEBI" id="CHEBI:64076"/>
        <dbReference type="ChEBI" id="CHEBI:456215"/>
        <dbReference type="ChEBI" id="CHEBI:456216"/>
        <dbReference type="EC" id="4.2.1.136"/>
    </reaction>
</comment>
<comment type="catalytic activity">
    <reaction>
        <text>(6R)-NADHX = (6S)-NADHX</text>
        <dbReference type="Rhea" id="RHEA:32215"/>
        <dbReference type="ChEBI" id="CHEBI:64074"/>
        <dbReference type="ChEBI" id="CHEBI:64075"/>
        <dbReference type="EC" id="5.1.99.6"/>
    </reaction>
</comment>
<comment type="catalytic activity">
    <reaction>
        <text>(6R)-NADPHX = (6S)-NADPHX</text>
        <dbReference type="Rhea" id="RHEA:32227"/>
        <dbReference type="ChEBI" id="CHEBI:64076"/>
        <dbReference type="ChEBI" id="CHEBI:64077"/>
        <dbReference type="EC" id="5.1.99.6"/>
    </reaction>
</comment>
<comment type="cofactor">
    <cofactor evidence="1">
        <name>K(+)</name>
        <dbReference type="ChEBI" id="CHEBI:29103"/>
    </cofactor>
    <text evidence="1">Binds 1 potassium ion per subunit.</text>
</comment>
<comment type="similarity">
    <text evidence="2">In the N-terminal section; belongs to the NnrE/AIBP family.</text>
</comment>
<comment type="similarity">
    <text evidence="2">In the C-terminal section; belongs to the NnrD/CARKD family.</text>
</comment>
<feature type="chain" id="PRO_0000119051" description="Bifunctional NAD(P)H-hydrate repair enzyme Nnr">
    <location>
        <begin position="1"/>
        <end position="491"/>
    </location>
</feature>
<feature type="domain" description="YjeF N-terminal">
    <location>
        <begin position="35"/>
        <end position="230"/>
    </location>
</feature>
<feature type="domain" description="YjeF C-terminal">
    <location>
        <begin position="232"/>
        <end position="490"/>
    </location>
</feature>
<feature type="region of interest" description="NAD(P)H-hydrate epimerase" evidence="1">
    <location>
        <begin position="1"/>
        <end position="230"/>
    </location>
</feature>
<feature type="region of interest" description="NADPHX 1; for epimerase activity" evidence="1">
    <location>
        <begin position="80"/>
        <end position="84"/>
    </location>
</feature>
<feature type="region of interest" description="NADPHX 1; for epimerase activity" evidence="1">
    <location>
        <begin position="158"/>
        <end position="164"/>
    </location>
</feature>
<feature type="region of interest" description="ADP-dependent (S)-NAD(P)H-hydrate dehydratase" evidence="1">
    <location>
        <begin position="232"/>
        <end position="491"/>
    </location>
</feature>
<feature type="region of interest" description="NADPHX 2; for dehydratase activity" evidence="1">
    <location>
        <begin position="380"/>
        <end position="386"/>
    </location>
</feature>
<feature type="binding site" evidence="1">
    <location>
        <position position="81"/>
    </location>
    <ligand>
        <name>K(+)</name>
        <dbReference type="ChEBI" id="CHEBI:29103"/>
    </ligand>
</feature>
<feature type="binding site" evidence="1">
    <location>
        <position position="154"/>
    </location>
    <ligand>
        <name>K(+)</name>
        <dbReference type="ChEBI" id="CHEBI:29103"/>
    </ligand>
</feature>
<feature type="binding site" evidence="1">
    <location>
        <position position="192"/>
    </location>
    <ligand>
        <name>(6S)-NADPHX</name>
        <dbReference type="ChEBI" id="CHEBI:64076"/>
        <label>1</label>
        <note>for epimerase activity</note>
    </ligand>
</feature>
<feature type="binding site" evidence="1">
    <location>
        <position position="195"/>
    </location>
    <ligand>
        <name>K(+)</name>
        <dbReference type="ChEBI" id="CHEBI:29103"/>
    </ligand>
</feature>
<feature type="binding site" evidence="1">
    <location>
        <position position="332"/>
    </location>
    <ligand>
        <name>(6S)-NADPHX</name>
        <dbReference type="ChEBI" id="CHEBI:64076"/>
        <label>2</label>
        <note>for dehydratase activity</note>
    </ligand>
</feature>
<feature type="binding site" evidence="1">
    <location>
        <begin position="404"/>
        <end position="408"/>
    </location>
    <ligand>
        <name>ADP</name>
        <dbReference type="ChEBI" id="CHEBI:456216"/>
    </ligand>
</feature>
<feature type="binding site" evidence="1">
    <location>
        <begin position="423"/>
        <end position="432"/>
    </location>
    <ligand>
        <name>ADP</name>
        <dbReference type="ChEBI" id="CHEBI:456216"/>
    </ligand>
</feature>
<feature type="binding site" evidence="1">
    <location>
        <position position="433"/>
    </location>
    <ligand>
        <name>(6S)-NADPHX</name>
        <dbReference type="ChEBI" id="CHEBI:64076"/>
        <label>2</label>
        <note>for dehydratase activity</note>
    </ligand>
</feature>
<evidence type="ECO:0000250" key="1"/>
<evidence type="ECO:0000305" key="2"/>
<accession>Q58981</accession>
<proteinExistence type="inferred from homology"/>